<keyword id="KW-0067">ATP-binding</keyword>
<keyword id="KW-0347">Helicase</keyword>
<keyword id="KW-0378">Hydrolase</keyword>
<keyword id="KW-0479">Metal-binding</keyword>
<keyword id="KW-0547">Nucleotide-binding</keyword>
<keyword id="KW-0539">Nucleus</keyword>
<keyword id="KW-1185">Reference proteome</keyword>
<keyword id="KW-0862">Zinc</keyword>
<keyword id="KW-0863">Zinc-finger</keyword>
<comment type="function">
    <text>May act as a helicase.</text>
</comment>
<comment type="subcellular location">
    <subcellularLocation>
        <location evidence="4">Nucleus</location>
    </subcellularLocation>
</comment>
<comment type="similarity">
    <text evidence="4">Belongs to the DNA2/NAM7 helicase family.</text>
</comment>
<name>HELZ_DANRE</name>
<proteinExistence type="evidence at transcript level"/>
<gene>
    <name type="primary">helz</name>
    <name type="ORF">zgc:77407</name>
</gene>
<feature type="chain" id="PRO_0000354097" description="Probable helicase with zinc finger domain">
    <location>
        <begin position="1"/>
        <end position="1860"/>
    </location>
</feature>
<feature type="zinc finger region" description="C3H1-type" evidence="2">
    <location>
        <begin position="168"/>
        <end position="196"/>
    </location>
</feature>
<feature type="region of interest" description="Disordered" evidence="3">
    <location>
        <begin position="1106"/>
        <end position="1136"/>
    </location>
</feature>
<feature type="region of interest" description="Disordered" evidence="3">
    <location>
        <begin position="1158"/>
        <end position="1177"/>
    </location>
</feature>
<feature type="region of interest" description="Disordered" evidence="3">
    <location>
        <begin position="1286"/>
        <end position="1317"/>
    </location>
</feature>
<feature type="region of interest" description="Disordered" evidence="3">
    <location>
        <begin position="1556"/>
        <end position="1604"/>
    </location>
</feature>
<feature type="region of interest" description="Disordered" evidence="3">
    <location>
        <begin position="1641"/>
        <end position="1709"/>
    </location>
</feature>
<feature type="region of interest" description="Disordered" evidence="3">
    <location>
        <begin position="1749"/>
        <end position="1860"/>
    </location>
</feature>
<feature type="short sequence motif" description="DEAA box">
    <location>
        <begin position="787"/>
        <end position="790"/>
    </location>
</feature>
<feature type="compositionally biased region" description="Low complexity" evidence="3">
    <location>
        <begin position="1107"/>
        <end position="1116"/>
    </location>
</feature>
<feature type="compositionally biased region" description="Basic and acidic residues" evidence="3">
    <location>
        <begin position="1286"/>
        <end position="1298"/>
    </location>
</feature>
<feature type="compositionally biased region" description="Polar residues" evidence="3">
    <location>
        <begin position="1301"/>
        <end position="1313"/>
    </location>
</feature>
<feature type="compositionally biased region" description="Low complexity" evidence="3">
    <location>
        <begin position="1641"/>
        <end position="1660"/>
    </location>
</feature>
<feature type="compositionally biased region" description="Pro residues" evidence="3">
    <location>
        <begin position="1760"/>
        <end position="1769"/>
    </location>
</feature>
<feature type="compositionally biased region" description="Pro residues" evidence="3">
    <location>
        <begin position="1783"/>
        <end position="1794"/>
    </location>
</feature>
<feature type="compositionally biased region" description="Low complexity" evidence="3">
    <location>
        <begin position="1847"/>
        <end position="1860"/>
    </location>
</feature>
<feature type="binding site" evidence="1">
    <location>
        <begin position="661"/>
        <end position="668"/>
    </location>
    <ligand>
        <name>ATP</name>
        <dbReference type="ChEBI" id="CHEBI:30616"/>
    </ligand>
</feature>
<protein>
    <recommendedName>
        <fullName>Probable helicase with zinc finger domain</fullName>
        <ecNumber>3.6.4.-</ecNumber>
    </recommendedName>
</protein>
<reference key="1">
    <citation type="submission" date="2004-02" db="EMBL/GenBank/DDBJ databases">
        <authorList>
            <consortium name="NIH - Zebrafish Gene Collection (ZGC) project"/>
        </authorList>
    </citation>
    <scope>NUCLEOTIDE SEQUENCE [LARGE SCALE MRNA]</scope>
    <source>
        <tissue>Embryo</tissue>
    </source>
</reference>
<evidence type="ECO:0000255" key="1"/>
<evidence type="ECO:0000255" key="2">
    <source>
        <dbReference type="PROSITE-ProRule" id="PRU00723"/>
    </source>
</evidence>
<evidence type="ECO:0000256" key="3">
    <source>
        <dbReference type="SAM" id="MobiDB-lite"/>
    </source>
</evidence>
<evidence type="ECO:0000305" key="4"/>
<accession>Q6NYU2</accession>
<dbReference type="EC" id="3.6.4.-"/>
<dbReference type="EMBL" id="BC066461">
    <property type="protein sequence ID" value="AAH66461.1"/>
    <property type="molecule type" value="mRNA"/>
</dbReference>
<dbReference type="RefSeq" id="NP_998431.1">
    <property type="nucleotide sequence ID" value="NM_213266.1"/>
</dbReference>
<dbReference type="SMR" id="Q6NYU2"/>
<dbReference type="FunCoup" id="Q6NYU2">
    <property type="interactions" value="1293"/>
</dbReference>
<dbReference type="STRING" id="7955.ENSDARP00000044095"/>
<dbReference type="PaxDb" id="7955-ENSDARP00000042673"/>
<dbReference type="GeneID" id="406550"/>
<dbReference type="KEGG" id="dre:406550"/>
<dbReference type="AGR" id="ZFIN:ZDB-GENE-040426-2419"/>
<dbReference type="CTD" id="9931"/>
<dbReference type="ZFIN" id="ZDB-GENE-040426-2419">
    <property type="gene designation" value="helz"/>
</dbReference>
<dbReference type="eggNOG" id="KOG1804">
    <property type="taxonomic scope" value="Eukaryota"/>
</dbReference>
<dbReference type="InParanoid" id="Q6NYU2"/>
<dbReference type="OrthoDB" id="5988104at2759"/>
<dbReference type="PhylomeDB" id="Q6NYU2"/>
<dbReference type="PRO" id="PR:Q6NYU2"/>
<dbReference type="Proteomes" id="UP000000437">
    <property type="component" value="Chromosome 3"/>
</dbReference>
<dbReference type="GO" id="GO:0005829">
    <property type="term" value="C:cytosol"/>
    <property type="evidence" value="ECO:0000318"/>
    <property type="project" value="GO_Central"/>
</dbReference>
<dbReference type="GO" id="GO:0005634">
    <property type="term" value="C:nucleus"/>
    <property type="evidence" value="ECO:0007669"/>
    <property type="project" value="UniProtKB-SubCell"/>
</dbReference>
<dbReference type="GO" id="GO:0043186">
    <property type="term" value="C:P granule"/>
    <property type="evidence" value="ECO:0000318"/>
    <property type="project" value="GO_Central"/>
</dbReference>
<dbReference type="GO" id="GO:0005524">
    <property type="term" value="F:ATP binding"/>
    <property type="evidence" value="ECO:0007669"/>
    <property type="project" value="UniProtKB-KW"/>
</dbReference>
<dbReference type="GO" id="GO:0003677">
    <property type="term" value="F:DNA binding"/>
    <property type="evidence" value="ECO:0007669"/>
    <property type="project" value="InterPro"/>
</dbReference>
<dbReference type="GO" id="GO:0003700">
    <property type="term" value="F:DNA-binding transcription factor activity"/>
    <property type="evidence" value="ECO:0007669"/>
    <property type="project" value="InterPro"/>
</dbReference>
<dbReference type="GO" id="GO:0004386">
    <property type="term" value="F:helicase activity"/>
    <property type="evidence" value="ECO:0007669"/>
    <property type="project" value="UniProtKB-KW"/>
</dbReference>
<dbReference type="GO" id="GO:0016787">
    <property type="term" value="F:hydrolase activity"/>
    <property type="evidence" value="ECO:0007669"/>
    <property type="project" value="UniProtKB-KW"/>
</dbReference>
<dbReference type="GO" id="GO:0003723">
    <property type="term" value="F:RNA binding"/>
    <property type="evidence" value="ECO:0000318"/>
    <property type="project" value="GO_Central"/>
</dbReference>
<dbReference type="GO" id="GO:0008270">
    <property type="term" value="F:zinc ion binding"/>
    <property type="evidence" value="ECO:0007669"/>
    <property type="project" value="UniProtKB-KW"/>
</dbReference>
<dbReference type="GO" id="GO:0035194">
    <property type="term" value="P:regulatory ncRNA-mediated post-transcriptional gene silencing"/>
    <property type="evidence" value="ECO:0000318"/>
    <property type="project" value="GO_Central"/>
</dbReference>
<dbReference type="CDD" id="cd18077">
    <property type="entry name" value="DEXXQc_HELZ"/>
    <property type="match status" value="1"/>
</dbReference>
<dbReference type="CDD" id="cd18808">
    <property type="entry name" value="SF1_C_Upf1"/>
    <property type="match status" value="1"/>
</dbReference>
<dbReference type="FunFam" id="3.40.50.300:FF:000419">
    <property type="entry name" value="Probable helicase with zinc finger domain"/>
    <property type="match status" value="1"/>
</dbReference>
<dbReference type="FunFam" id="3.40.50.300:FF:000453">
    <property type="entry name" value="Probable helicase with zinc finger domain"/>
    <property type="match status" value="1"/>
</dbReference>
<dbReference type="FunFam" id="4.10.1000.10:FF:000009">
    <property type="entry name" value="probable helicase with zinc finger domain"/>
    <property type="match status" value="1"/>
</dbReference>
<dbReference type="Gene3D" id="3.40.50.300">
    <property type="entry name" value="P-loop containing nucleotide triphosphate hydrolases"/>
    <property type="match status" value="2"/>
</dbReference>
<dbReference type="Gene3D" id="4.10.1000.10">
    <property type="entry name" value="Zinc finger, CCCH-type"/>
    <property type="match status" value="1"/>
</dbReference>
<dbReference type="InterPro" id="IPR045055">
    <property type="entry name" value="DNA2/NAM7-like"/>
</dbReference>
<dbReference type="InterPro" id="IPR041679">
    <property type="entry name" value="DNA2/NAM7-like_C"/>
</dbReference>
<dbReference type="InterPro" id="IPR041677">
    <property type="entry name" value="DNA2/NAM7_AAA_11"/>
</dbReference>
<dbReference type="InterPro" id="IPR049569">
    <property type="entry name" value="HELZ_DEAD-box_1"/>
</dbReference>
<dbReference type="InterPro" id="IPR027417">
    <property type="entry name" value="P-loop_NTPase"/>
</dbReference>
<dbReference type="InterPro" id="IPR011539">
    <property type="entry name" value="RHD_DNA_bind_dom"/>
</dbReference>
<dbReference type="InterPro" id="IPR047187">
    <property type="entry name" value="SF1_C_Upf1"/>
</dbReference>
<dbReference type="InterPro" id="IPR000571">
    <property type="entry name" value="Znf_CCCH"/>
</dbReference>
<dbReference type="InterPro" id="IPR036855">
    <property type="entry name" value="Znf_CCCH_sf"/>
</dbReference>
<dbReference type="PANTHER" id="PTHR10887">
    <property type="entry name" value="DNA2/NAM7 HELICASE FAMILY"/>
    <property type="match status" value="1"/>
</dbReference>
<dbReference type="PANTHER" id="PTHR10887:SF365">
    <property type="entry name" value="HELICASE WITH ZINC FINGER DOMAIN-RELATED"/>
    <property type="match status" value="1"/>
</dbReference>
<dbReference type="Pfam" id="PF13086">
    <property type="entry name" value="AAA_11"/>
    <property type="match status" value="2"/>
</dbReference>
<dbReference type="Pfam" id="PF13087">
    <property type="entry name" value="AAA_12"/>
    <property type="match status" value="1"/>
</dbReference>
<dbReference type="Pfam" id="PF00642">
    <property type="entry name" value="zf-CCCH"/>
    <property type="match status" value="1"/>
</dbReference>
<dbReference type="SMART" id="SM00356">
    <property type="entry name" value="ZnF_C3H1"/>
    <property type="match status" value="1"/>
</dbReference>
<dbReference type="SUPFAM" id="SSF90229">
    <property type="entry name" value="CCCH zinc finger"/>
    <property type="match status" value="1"/>
</dbReference>
<dbReference type="SUPFAM" id="SSF52540">
    <property type="entry name" value="P-loop containing nucleoside triphosphate hydrolases"/>
    <property type="match status" value="1"/>
</dbReference>
<dbReference type="PROSITE" id="PS50103">
    <property type="entry name" value="ZF_C3H1"/>
    <property type="match status" value="1"/>
</dbReference>
<organism>
    <name type="scientific">Danio rerio</name>
    <name type="common">Zebrafish</name>
    <name type="synonym">Brachydanio rerio</name>
    <dbReference type="NCBI Taxonomy" id="7955"/>
    <lineage>
        <taxon>Eukaryota</taxon>
        <taxon>Metazoa</taxon>
        <taxon>Chordata</taxon>
        <taxon>Craniata</taxon>
        <taxon>Vertebrata</taxon>
        <taxon>Euteleostomi</taxon>
        <taxon>Actinopterygii</taxon>
        <taxon>Neopterygii</taxon>
        <taxon>Teleostei</taxon>
        <taxon>Ostariophysi</taxon>
        <taxon>Cypriniformes</taxon>
        <taxon>Danionidae</taxon>
        <taxon>Danioninae</taxon>
        <taxon>Danio</taxon>
    </lineage>
</organism>
<sequence>MEDRRPQKSCDEAIGSLVRQEYEAAVAHSTEALLAMGPRTPTPSTALLRTRALLYRIAARLQLKDYDQADEDCKHVFAEELAKGDGSFRAGLQSLLLDGSLQEVCSVLSKALYGEPLNGIMTKDMTRLKRLLSEIEAARSKVVFSEENEEDVQEGWQFRPPPRGVTSSEEYTLCKRFLEQGLCRYGAQCTSAHSQEELTEWQRRYASRLIRLKQQQEGKHFSENYMEALIEKWINSLTPERVMNDCVDGVTVEHSSDLSITVNTKKSSHSWTFTLFCKPVRTLQRIALLYDANRPHFSIAAVSAGDASALEPQPVCPGGCQEWSAASPVQNGMDHCIYTVEIAFSTEIFGTFRQTVVFDLGCEPVLMQRVMVDAASIEDLEHLLQARQQLLMTAKRWDSSCKTIVEFVPNENMDLERSLLTRYQIPLSADQLFTQSVLDKTLTRDNYQPRLHDLLYIEEIAQYKEVTKFNIKVNLQLVTSFMLTGISGGAKYAQNGQLFARFKLTETLSEDTLAGRLVMTKVNSVLLLPVFKERMGQNQPAGAKERVYEALIEEKTKDYIFLRVCKECCDELGLVADQELQVELQFQLNRLPLCEMHYALDRVRDNSILFPDISLTPTIPWSPNRQWDEQLDPRLNAKQKEAILAITTPLSINLPPVLIIGPYGTGKTFTLAQAVKHILKQPESRVLICTHSNSAADLYIKDYLHPYVEAGNPHARPLRVYFRNRWVKTVHPLVQQYCLISGAHFTFQMPTRQDVERHRVVVVTLSTSQYLCQLDLEPGIFTHILLDEAAQAMECETIMPLALAVKSTRVVLAGDHMQLSPFVYSEFARERNLHVSLLDRLYEHYPSEYPCRILLCENYRSHEAIINYTSDLFYEGKLMASGKQPPHKDFYPLTFFTARGEDVQEKNSTAYYNNAEVFEIVERVEEMRKKWPVSWGKLEEGSIGVVSPYADQVFRIRAELRKKRMSEVSVERVLNVQGKQFRVLFLSTVRTRHTCKHKQTAIKRKEQLVEDSTEDLDYGFLSNYKLLNTAITRAQSLVAVVGDPIALCSVGRCRKFWETFISICHENHSLHGITFEQIKIQLEALELKKTYVLNPLAPEFIPRALRSQHPPQQGPGKHQHSPPKAKGQLANHTEPFPPEGFVQPNAAVLMGNPIQAFTPPGAGAPASGKSPSPVQRLDPGASILYVPAVYGGNMVMPMPLPLPWAGYQSRFPMDPRIMSHQAAMYNLNLRPAASRTSPVLYGFSHASPLGLNQQQNTEKELLQEPSGNGKMDINGKAEHCRLLTPERKAPELKEKQGDLESVQNKSPEPQSNMGFPANRLIRKDPQRALNFHMAPPHPAFPSHHGTSQFPQQYGLSRPPLRMQTPMHPQASSFPPSFYSGPPMGPRGLQSPVLEGGEDPMGAGMSEDLKGVVRGLPAQMHQQPLRLNSFGEESLDSLLGDTLDGQASSGMDALQHQQQARVGQWGEHTPFLPAGVAPFPLPQQLAHLAQPGLRIPPQILRAGWGLGPAADEEPRPTMPRYPGLLREMLPQDQQYEQRDPAEMPPPQSRLLQYRQQIQPRSPGDLPSPSSSAPNHNFPAPAQPSYPDTSREPPVGFSQAPFPPDHSAGPLPVKYLLQEAHWPHPGHMLGHGLPFGLQAMAQRQDPGPLQHQQQKQQLQAPQSSLHSLDEYEPRGPGRPLYQRRISSSSPQPYPDSLEPQDQPVPSYRYPSADLWLGGPGPVPGPAPIHNIPCNGASHIGPHREILVSKAMSEEQMKAECLQPPPPPPPHPASAASLQHHGQFPPLLPSKQTPPDPGGGGNTSPAGHPKPPTMSYASALRAPPKPRPMLPEQSKKNSDPISLLQELSIGSSNSSNGYYTYFK</sequence>